<reference key="1">
    <citation type="journal article" date="2003" name="Virus Res.">
        <title>Bat lyssaviruses (Aravan and Khujand) from Central Asia: phylogenetic relationships according to N, P and G gene sequences.</title>
        <authorList>
            <person name="Kuzmin I.V."/>
            <person name="Orciari L.A."/>
            <person name="Arai Y.T."/>
            <person name="Smith J.S."/>
            <person name="Hanlon C.A."/>
            <person name="Kameoka Y."/>
            <person name="Rupprecht C.E."/>
        </authorList>
    </citation>
    <scope>NUCLEOTIDE SEQUENCE [GENOMIC RNA]</scope>
</reference>
<reference key="2">
    <citation type="journal article" date="2008" name="Virus Res.">
        <title>Complete genomes of Aravan, Khujand, Irkut and West Caucasian bat viruses, with special attention to the polymerase gene and non-coding regions.</title>
        <authorList>
            <person name="Kuzmin I.V."/>
            <person name="Wu X."/>
            <person name="Tordo N."/>
            <person name="Rupprecht C.E."/>
        </authorList>
    </citation>
    <scope>NUCLEOTIDE SEQUENCE [GENOMIC RNA]</scope>
</reference>
<evidence type="ECO:0000250" key="1"/>
<evidence type="ECO:0000255" key="2"/>
<evidence type="ECO:0000305" key="3"/>
<keyword id="KW-0325">Glycoprotein</keyword>
<keyword id="KW-0449">Lipoprotein</keyword>
<keyword id="KW-0472">Membrane</keyword>
<keyword id="KW-0564">Palmitate</keyword>
<keyword id="KW-0732">Signal</keyword>
<keyword id="KW-0812">Transmembrane</keyword>
<keyword id="KW-1133">Transmembrane helix</keyword>
<keyword id="KW-0261">Viral envelope protein</keyword>
<keyword id="KW-0946">Virion</keyword>
<feature type="signal peptide" evidence="2">
    <location>
        <begin position="1"/>
        <end position="19"/>
    </location>
</feature>
<feature type="chain" id="PRO_0000295796" description="Glycoprotein">
    <location>
        <begin position="20"/>
        <end position="526"/>
    </location>
</feature>
<feature type="topological domain" description="Virion surface" evidence="2">
    <location>
        <begin position="20"/>
        <end position="459"/>
    </location>
</feature>
<feature type="transmembrane region" description="Helical" evidence="2">
    <location>
        <begin position="460"/>
        <end position="480"/>
    </location>
</feature>
<feature type="topological domain" description="Intravirion" evidence="2">
    <location>
        <begin position="481"/>
        <end position="526"/>
    </location>
</feature>
<feature type="lipid moiety-binding region" description="S-palmitoyl cysteine; by host" evidence="1">
    <location>
        <position position="480"/>
    </location>
</feature>
<feature type="glycosylation site" description="N-linked (GlcNAc...) asparagine; by host" evidence="1">
    <location>
        <position position="338"/>
    </location>
</feature>
<gene>
    <name type="primary">G</name>
</gene>
<comment type="function">
    <text evidence="1">Attaches the virus to host cellular receptor, inducing endocytosis of the virion. In the endosome, the acidic pH induces conformational changes in the glycoprotein trimer, which trigger fusion between virus and cell membrane. There is convincing in vitro evidence that the muscular form of the nicotinic acetylcholine receptor (nAChR), the neuronal cell adhesion molecule (NCAM), and the p75 neurotrophin receptor (p75NTR) bind glycoprotein and thereby facilitate rabies virus entry into cells (By similarity).</text>
</comment>
<comment type="subunit">
    <text evidence="1">Homotrimer. Interacts with matrix protein (By similarity).</text>
</comment>
<comment type="subcellular location">
    <subcellularLocation>
        <location evidence="3">Virion membrane</location>
        <topology evidence="3">Single-pass type I membrane protein</topology>
    </subcellularLocation>
</comment>
<comment type="PTM">
    <text evidence="1">Glycosylated and palmitoylated by host. Glycosylation is crucial for glycoprotein export at the cell surface (By similarity).</text>
</comment>
<comment type="biotechnology">
    <text>Primary surface antigen capable of inducing and reacting with virus-neutralizing antibodies. Almost all human and veterinary vaccines are based on the functional aspects of the G protein.</text>
</comment>
<comment type="miscellaneous">
    <text evidence="1">Arg-352 is highly involved in rabies virus pathogenicity. Its mutation dramatically attenuates the virus (By similarity).</text>
</comment>
<comment type="similarity">
    <text evidence="3">Belongs to the lyssavirus glycoprotein family.</text>
</comment>
<proteinExistence type="evidence at protein level"/>
<organism>
    <name type="scientific">Khujand virus</name>
    <name type="common">KHUV</name>
    <dbReference type="NCBI Taxonomy" id="237716"/>
    <lineage>
        <taxon>Viruses</taxon>
        <taxon>Riboviria</taxon>
        <taxon>Orthornavirae</taxon>
        <taxon>Negarnaviricota</taxon>
        <taxon>Haploviricotina</taxon>
        <taxon>Monjiviricetes</taxon>
        <taxon>Mononegavirales</taxon>
        <taxon>Rhabdoviridae</taxon>
        <taxon>Alpharhabdovirinae</taxon>
        <taxon>Lyssavirus</taxon>
    </lineage>
</organism>
<dbReference type="EMBL" id="EF614261">
    <property type="protein sequence ID" value="AAP86779.1"/>
    <property type="molecule type" value="Genomic_RNA"/>
</dbReference>
<dbReference type="RefSeq" id="YP_009094330.1">
    <property type="nucleotide sequence ID" value="NC_025385.1"/>
</dbReference>
<dbReference type="SMR" id="Q6X1D1"/>
<dbReference type="GlyCosmos" id="Q6X1D1">
    <property type="glycosylation" value="1 site, No reported glycans"/>
</dbReference>
<dbReference type="GeneID" id="21011770"/>
<dbReference type="KEGG" id="vg:21011770"/>
<dbReference type="OrthoDB" id="21147at10239"/>
<dbReference type="Proteomes" id="UP000136780">
    <property type="component" value="Genome"/>
</dbReference>
<dbReference type="GO" id="GO:0016020">
    <property type="term" value="C:membrane"/>
    <property type="evidence" value="ECO:0007669"/>
    <property type="project" value="UniProtKB-KW"/>
</dbReference>
<dbReference type="GO" id="GO:0019031">
    <property type="term" value="C:viral envelope"/>
    <property type="evidence" value="ECO:0007669"/>
    <property type="project" value="UniProtKB-KW"/>
</dbReference>
<dbReference type="GO" id="GO:0055036">
    <property type="term" value="C:virion membrane"/>
    <property type="evidence" value="ECO:0007669"/>
    <property type="project" value="UniProtKB-SubCell"/>
</dbReference>
<dbReference type="Gene3D" id="2.30.29.130">
    <property type="match status" value="1"/>
</dbReference>
<dbReference type="InterPro" id="IPR055448">
    <property type="entry name" value="PH_Rhabdo_glycop"/>
</dbReference>
<dbReference type="InterPro" id="IPR055447">
    <property type="entry name" value="Rhabdo_glycop_CD"/>
</dbReference>
<dbReference type="InterPro" id="IPR001903">
    <property type="entry name" value="Rhabdo_glycop_FD"/>
</dbReference>
<dbReference type="Pfam" id="PF24834">
    <property type="entry name" value="PH_Rhabdo_glycop"/>
    <property type="match status" value="1"/>
</dbReference>
<dbReference type="Pfam" id="PF24833">
    <property type="entry name" value="Rhabdo_glycop_CD"/>
    <property type="match status" value="1"/>
</dbReference>
<dbReference type="Pfam" id="PF00974">
    <property type="entry name" value="Rhabdo_glycop_FD"/>
    <property type="match status" value="1"/>
</dbReference>
<dbReference type="SUPFAM" id="SSF161008">
    <property type="entry name" value="Viral glycoprotein ectodomain-like"/>
    <property type="match status" value="1"/>
</dbReference>
<accession>Q6X1D1</accession>
<organismHost>
    <name type="scientific">Myotis mystacinus</name>
    <name type="common">Whiskered bat</name>
    <dbReference type="NCBI Taxonomy" id="109479"/>
</organismHost>
<protein>
    <recommendedName>
        <fullName>Glycoprotein</fullName>
    </recommendedName>
</protein>
<sequence>MPSQAVFLVLTTVFSQCVGKFPIYTIPDKLGPWSPIDIHHLSCPNNLVVEDDGCTTLSGFTYMELKVGYITTIKVDGFTCTGIVTEAETYTNFVGYVTTTFKRKHFRPGPSACRDAYNWKAAGDPRYEESLHNPYPDSHWLRTVTTTKESLLIISPSVVDMDAYDKSLLSKIFPNGKCPGVSIASPFCSTNHDYTIWMPENTKTGMSCDIFTTSKGKRATKDGKLCGFVDERGLYKSLKGSCKLKLCGVSGLRLMDGSWVSIQNHEEAKWCPPDQLVNVHDFHSDEIEHLIVEELVKKREECLDALESIMTTKSISFRRLSHLRKLVPGFGKAYTIINKTLMEADAHYKSIREWSEIIPSKGCLVAGGRCYHHHNGVFFNGIILSPDGHVLIPEMQSALLQQHIELLESSVIPLMHPLADPSTVFKGDDGAEDFVEVHLPDVQKQISGIDLGLPEWKRYFLIGVAALTLFALTIFVVVCCRRVRRRERAKPNPVELIRKVSVTSQSGKVIPSWESYKVEAEGQSQA</sequence>
<name>GLYCO_KHUV</name>